<keyword id="KW-1035">Host cytoplasm</keyword>
<proteinExistence type="inferred from homology"/>
<organism>
    <name type="scientific">Rice dwarf virus (isolate O)</name>
    <name type="common">RDV</name>
    <dbReference type="NCBI Taxonomy" id="142805"/>
    <lineage>
        <taxon>Viruses</taxon>
        <taxon>Riboviria</taxon>
        <taxon>Orthornavirae</taxon>
        <taxon>Duplornaviricota</taxon>
        <taxon>Resentoviricetes</taxon>
        <taxon>Reovirales</taxon>
        <taxon>Sedoreoviridae</taxon>
        <taxon>Phytoreovirus</taxon>
        <taxon>Rice dwarf virus</taxon>
    </lineage>
</organism>
<comment type="function">
    <text>Constituent of viral factories.</text>
</comment>
<comment type="subcellular location">
    <subcellularLocation>
        <location evidence="1">Host cytoplasm</location>
    </subcellularLocation>
    <text evidence="1">Constituent of spherical cytoplasmic structures, called virus factories, that appear early after infection and are the site of viral replication and packaging.</text>
</comment>
<comment type="similarity">
    <text evidence="3">Belongs to the phytoreovirus non-structural protein Pns12A family.</text>
</comment>
<evidence type="ECO:0000250" key="1"/>
<evidence type="ECO:0000256" key="2">
    <source>
        <dbReference type="SAM" id="MobiDB-lite"/>
    </source>
</evidence>
<evidence type="ECO:0000305" key="3"/>
<protein>
    <recommendedName>
        <fullName>Non-structural protein 12A</fullName>
        <shortName>Pns12A</shortName>
    </recommendedName>
</protein>
<dbReference type="EMBL" id="D11369">
    <property type="protein sequence ID" value="BAA01971.1"/>
    <property type="molecule type" value="Genomic_RNA"/>
</dbReference>
<dbReference type="GO" id="GO:0030430">
    <property type="term" value="C:host cell cytoplasm"/>
    <property type="evidence" value="ECO:0007669"/>
    <property type="project" value="UniProtKB-SubCell"/>
</dbReference>
<feature type="chain" id="PRO_0000222804" description="Non-structural protein 12A">
    <location>
        <begin position="1"/>
        <end position="312"/>
    </location>
</feature>
<feature type="region of interest" description="Disordered" evidence="2">
    <location>
        <begin position="1"/>
        <end position="37"/>
    </location>
</feature>
<feature type="region of interest" description="Disordered" evidence="2">
    <location>
        <begin position="62"/>
        <end position="97"/>
    </location>
</feature>
<feature type="region of interest" description="Disordered" evidence="2">
    <location>
        <begin position="112"/>
        <end position="159"/>
    </location>
</feature>
<feature type="compositionally biased region" description="Low complexity" evidence="2">
    <location>
        <begin position="1"/>
        <end position="23"/>
    </location>
</feature>
<feature type="compositionally biased region" description="Basic and acidic residues" evidence="2">
    <location>
        <begin position="63"/>
        <end position="73"/>
    </location>
</feature>
<feature type="compositionally biased region" description="Polar residues" evidence="2">
    <location>
        <begin position="74"/>
        <end position="97"/>
    </location>
</feature>
<feature type="compositionally biased region" description="Basic and acidic residues" evidence="2">
    <location>
        <begin position="122"/>
        <end position="134"/>
    </location>
</feature>
<feature type="compositionally biased region" description="Polar residues" evidence="2">
    <location>
        <begin position="135"/>
        <end position="154"/>
    </location>
</feature>
<reference key="1">
    <citation type="submission" date="1992-07" db="EMBL/GenBank/DDBJ databases">
        <title>Complete nucleotide sequence of rice dwarf virus genome segment 12.</title>
        <authorList>
            <person name="Suda N."/>
            <person name="Uyeda I."/>
            <person name="Kimura I."/>
            <person name="Shikata E."/>
        </authorList>
    </citation>
    <scope>NUCLEOTIDE SEQUENCE [GENOMIC RNA]</scope>
</reference>
<organismHost>
    <name type="scientific">Alopecurus aequalis</name>
    <dbReference type="NCBI Taxonomy" id="114194"/>
</organismHost>
<organismHost>
    <name type="scientific">Echinochloa crus-galli</name>
    <name type="common">Barnyard grass</name>
    <name type="synonym">Panicum crus-galli</name>
    <dbReference type="NCBI Taxonomy" id="90397"/>
</organismHost>
<organismHost>
    <name type="scientific">Nephotettix cincticeps</name>
    <name type="common">Green rice leafhopper</name>
    <name type="synonym">Selenocephalus cincticeps</name>
    <dbReference type="NCBI Taxonomy" id="94400"/>
</organismHost>
<organismHost>
    <name type="scientific">Oryza sativa</name>
    <name type="common">Rice</name>
    <dbReference type="NCBI Taxonomy" id="4530"/>
</organismHost>
<organismHost>
    <name type="scientific">Paspalum</name>
    <dbReference type="NCBI Taxonomy" id="147271"/>
</organismHost>
<name>NSP12_RDVO</name>
<accession>Q86780</accession>
<accession>Q85445</accession>
<accession>Q86779</accession>
<sequence>MFKSGSGSLKRSGSISSVKSFSGDSEKGLPPISRGSVSIASQNSEPLIVPASSSSFAATSDFVPEKTKSEGNLKNKSSVITGNFGSSGPTNAHYNQNANGDRLAENLLLKESSKGRGSSTPDARHTATDSRLSQEVKQPFSEENASGNDLNTGRGSHGTGDGVEQYYKFDCEEGMSAYHKRVVDTFFKYFEYPAEDGHSTLYSDVMFLSGGGDLGLLVMSRYQEVMTLRLRSAIYGIFCYLQALTAYLTYFSAKVGQAVMLDEELEKYEIRLDVAQDDDPIVFQITTGVFTSGVAHDLRKLTQILETFSLER</sequence>